<accession>P19754</accession>
<protein>
    <recommendedName>
        <fullName>Adenylate cyclase type 1</fullName>
        <ecNumber evidence="8 9 10 11">4.6.1.1</ecNumber>
    </recommendedName>
    <alternativeName>
        <fullName>ATP pyrophosphate-lyase 1</fullName>
    </alternativeName>
    <alternativeName>
        <fullName>Adenylate cyclase type I</fullName>
    </alternativeName>
    <alternativeName>
        <fullName evidence="13">Adenylyl cyclase 1</fullName>
        <shortName evidence="12">AC1</shortName>
    </alternativeName>
    <alternativeName>
        <fullName evidence="13">Ca(2+)/calmodulin-activated adenylyl cyclase</fullName>
    </alternativeName>
</protein>
<name>ADCY1_BOVIN</name>
<gene>
    <name type="primary">ADCY1</name>
</gene>
<comment type="function">
    <text evidence="2 8 9 10 11">Catalyzes the formation of the signaling molecule cAMP in response to G-protein signaling (PubMed:19029295, PubMed:2022671, PubMed:2472670, PubMed:8119955). Mediates responses to increased cellular Ca(2+)/calmodulin levels (PubMed:19029295, PubMed:2022671). May be involved in regulatory processes in the central nervous system. May play a role in memory and learning. Plays a role in the regulation of the circadian rhythm of daytime contrast sensitivity probably by modulating the rhythmic synthesis of cyclic AMP in the retina (By similarity).</text>
</comment>
<comment type="catalytic activity">
    <reaction evidence="8 9 10 11">
        <text>ATP = 3',5'-cyclic AMP + diphosphate</text>
        <dbReference type="Rhea" id="RHEA:15389"/>
        <dbReference type="ChEBI" id="CHEBI:30616"/>
        <dbReference type="ChEBI" id="CHEBI:33019"/>
        <dbReference type="ChEBI" id="CHEBI:58165"/>
        <dbReference type="EC" id="4.6.1.1"/>
    </reaction>
</comment>
<comment type="cofactor">
    <cofactor evidence="9">
        <name>Mg(2+)</name>
        <dbReference type="ChEBI" id="CHEBI:18420"/>
    </cofactor>
    <cofactor evidence="9">
        <name>Mn(2+)</name>
        <dbReference type="ChEBI" id="CHEBI:29035"/>
    </cofactor>
    <text evidence="4">Binds 2 magnesium ions per subunit. Is also active with manganese (in vitro).</text>
</comment>
<comment type="activity regulation">
    <text evidence="8 9 11">Activated by G(s) G alpha protein GNAS (PubMed:2022671). Inhibited by G(i) G alpha protein GNAI1 (PubMed:8119955). Is further activated by the complex formed by GNB1 and GNG2 (PubMed:2022671). Activated by calcium/calmodulin (PubMed:19029295, PubMed:2022671). Inhibited by the ATP analogs adenosine, 2'-deoxyadenosine and 2'-deoxy-3'-AMP (PubMed:2022671).</text>
</comment>
<comment type="subunit">
    <text evidence="8">Interacts with CALM.</text>
</comment>
<comment type="subcellular location">
    <subcellularLocation>
        <location evidence="9 10">Membrane</location>
        <topology evidence="14 15">Multi-pass membrane protein</topology>
    </subcellularLocation>
    <subcellularLocation>
        <location evidence="8 9">Cell membrane</location>
        <topology evidence="14">Multi-pass membrane protein</topology>
    </subcellularLocation>
    <subcellularLocation>
        <location evidence="2">Cytoplasm</location>
    </subcellularLocation>
    <subcellularLocation>
        <location evidence="8">Membrane raft</location>
    </subcellularLocation>
    <text evidence="2">Expressed in the cytoplasm of supporting cells and hair cells of the cochlea vestibule, as well as to the cochlear hair cell nuclei and stereocilia.</text>
</comment>
<comment type="tissue specificity">
    <text evidence="10">Detected in brain cortex (at protein level). Detected in brain.</text>
</comment>
<comment type="domain">
    <text evidence="4">The protein contains two modules with six transmembrane helices each; both are required for catalytic activity. Isolated N-terminal or C-terminal guanylate cyclase domains have no catalytic activity, but when they are brought together, enzyme activity is restored. The active site is at the interface of the two domains. Both contribute substrate-binding residues, but the catalytic metal ions are bound exclusively via the N-terminal guanylate cyclase domain.</text>
</comment>
<comment type="PTM">
    <text evidence="9">N-glycosylated.</text>
</comment>
<comment type="similarity">
    <text evidence="6">Belongs to the adenylyl cyclase class-4/guanylyl cyclase family.</text>
</comment>
<reference key="1">
    <citation type="journal article" date="1989" name="Science">
        <title>Adenylyl cyclase amino acid sequence: possible channel- or transporter-like structure.</title>
        <authorList>
            <person name="Krupinski J."/>
            <person name="Coussen F."/>
            <person name="Bakalyar H.A."/>
            <person name="Tang W.-J."/>
            <person name="Feinstein P.G."/>
            <person name="Orth K."/>
            <person name="Slaughter C."/>
            <person name="Reed R.R."/>
            <person name="Gilman A.G."/>
        </authorList>
    </citation>
    <scope>NUCLEOTIDE SEQUENCE [MRNA]</scope>
    <scope>PARTIAL PROTEIN SEQUENCE</scope>
    <scope>CATALYTIC ACTIVITY</scope>
    <scope>ACTIVITY REGULATION</scope>
    <scope>TISSUE SPECIFICITY</scope>
    <scope>SUBCELLULAR LOCATION</scope>
    <source>
        <tissue>Brain</tissue>
    </source>
</reference>
<reference key="2">
    <citation type="journal article" date="1991" name="J. Biol. Chem.">
        <title>Expression and characterization of calmodulin-activated (type I) adenylylcyclase.</title>
        <authorList>
            <person name="Tang W.J."/>
            <person name="Krupinski J."/>
            <person name="Gilman A.G."/>
        </authorList>
    </citation>
    <scope>FUNCTION</scope>
    <scope>CATALYTIC ACTIVITY</scope>
    <scope>SUBCELLULAR LOCATION</scope>
    <scope>ACTIVITY REGULATION</scope>
    <scope>GLYCOSYLATION</scope>
</reference>
<reference key="3">
    <citation type="journal article" date="1994" name="J. Biol. Chem.">
        <title>Distinct patterns of bidirectional regulation of mammalian adenylyl cyclases.</title>
        <authorList>
            <person name="Taussig R."/>
            <person name="Tang W.J."/>
            <person name="Hepler J.R."/>
            <person name="Gilman A.G."/>
        </authorList>
    </citation>
    <scope>FUNCTION</scope>
    <scope>CATALYTIC ACTIVITY</scope>
    <scope>ACTIVITY REGULATION</scope>
</reference>
<reference key="4">
    <citation type="journal article" date="2009" name="J. Biol. Chem.">
        <title>Distinct mechanisms of regulation by Ca2+/calmodulin of type 1 and 8 adenylyl cyclases support their different physiological roles.</title>
        <authorList>
            <person name="Masada N."/>
            <person name="Ciruela A."/>
            <person name="Macdougall D.A."/>
            <person name="Cooper D.M."/>
        </authorList>
    </citation>
    <scope>FUNCTION</scope>
    <scope>CATALYTIC ACTIVITY</scope>
    <scope>SUBCELLULAR LOCATION</scope>
    <scope>ACTIVITY REGULATION</scope>
    <scope>MUTAGENESIS OF PHE-503</scope>
    <scope>INTERACTION WITH CALM</scope>
</reference>
<reference key="5">
    <citation type="journal article" date="1997" name="Proc. Natl. Acad. Sci. U.S.A.">
        <title>Catalytic mechanism of the adenylyl and guanylyl cyclases: modeling and mutational analysis.</title>
        <authorList>
            <person name="Liu Y."/>
            <person name="Ruoho A.E."/>
            <person name="Rao V.D."/>
            <person name="Hurley J.H."/>
        </authorList>
    </citation>
    <scope>3D-STRUCTURE MODELING OF 295-450; 861-936 AND 950-1045</scope>
</reference>
<organism>
    <name type="scientific">Bos taurus</name>
    <name type="common">Bovine</name>
    <dbReference type="NCBI Taxonomy" id="9913"/>
    <lineage>
        <taxon>Eukaryota</taxon>
        <taxon>Metazoa</taxon>
        <taxon>Chordata</taxon>
        <taxon>Craniata</taxon>
        <taxon>Vertebrata</taxon>
        <taxon>Euteleostomi</taxon>
        <taxon>Mammalia</taxon>
        <taxon>Eutheria</taxon>
        <taxon>Laurasiatheria</taxon>
        <taxon>Artiodactyla</taxon>
        <taxon>Ruminantia</taxon>
        <taxon>Pecora</taxon>
        <taxon>Bovidae</taxon>
        <taxon>Bovinae</taxon>
        <taxon>Bos</taxon>
    </lineage>
</organism>
<sequence length="1134" mass="123979">MAGAPRGRGGGGGGGGAGESGGAERAAGPGGRRGLRACDEEFACPELEALFRGYTLRLEQAATLKALAVLSLLAGALALAELLGAPGPAPGLAKGSHPVHCVLFLALLVVTNVRSLQVPQLQQVGQLALLFSLTFALLCCPFALGGPAGAHAGAAAVPATADQGVWQLLLVTFVSYALLPVRSLLAIGFGLVVAASHLLVTATLVPAKRPRLWRTLGANALLFLGVNVYGIFVRILAERAQRKAFLQARNCIEDRLRLEDENEKQERLLMSLLPRNVAMEMKEDFLKPPERIFHKIYIQRHDNVSILFADIVGFTGLASQCTAQELVKLLNELFGKFDELATENHCRRIKILGDCYYCVSGLTQPKTDHAHCCVEMGLDMIDTITSVAEATEVDLNMRVGLHTGRVLCGVLGLRKWQYDVWSNDVTLANVMEAAGLPGKVHITKTTLACLNGDYEVEPGHGHERNSFLKTHNIETFFIVPSHRRKIFPGLILSDIKPAKRMKFKTVCYLLVQLMHCRKMFKAEIPFSNVMTCEDDDKRRALRTASEKLRNRSSFSTNVVQTTPGTRVNRYIGRLLEARQMELEMADLNFFTLKYKQAERERKYHQLQDEYFTSAVVLALILAALFGLVYLLIIPQSVAVLLLLVFCICFLVACVLYLHITRVQCFPGCLTIQIRTVLCIFIVVLIYSVAQGCVVGCLPWSWSSSPNGSLVVLSSGGRDPVLPVPPCESAPHALLCGLVGTLPLAIFLRVSSLPKMILLAVLTTSYILVLELSGYTKAMGAGAISGRSFEPIMAILLFSCTLALHARQVDVKLRLDYLWAAQAEEERDDMEKVKLDNKRILFNLLPAHVAQHFLMSNPRNMDLYYQSYSQVGVMFASIPNFNDFYIELDGNNMGVECLRLLNEIIADFDELMDKDFYKDLEKIKTIGSTYMAAVGLAPTAGTKAKKCISSHLSTLADFAIEMFDVLDEINYQSYNDFVLRVGINVGPVVAGVIGARRPQYDIWGNTVNVASRMDSTGVQGRIQVTEEVHRLLRRGSYRFVCRGKVSVKGKGEMLTYFLEGRTDGNGSQTRSLNSERKMYPFGRAGLQTRLAAGHPPVPPAAGLPVGAGPGALQGSGLAPGPPGQHLPPGASGKEA</sequence>
<keyword id="KW-0067">ATP-binding</keyword>
<keyword id="KW-0090">Biological rhythms</keyword>
<keyword id="KW-0112">Calmodulin-binding</keyword>
<keyword id="KW-0115">cAMP biosynthesis</keyword>
<keyword id="KW-1003">Cell membrane</keyword>
<keyword id="KW-0963">Cytoplasm</keyword>
<keyword id="KW-0903">Direct protein sequencing</keyword>
<keyword id="KW-0325">Glycoprotein</keyword>
<keyword id="KW-0456">Lyase</keyword>
<keyword id="KW-0460">Magnesium</keyword>
<keyword id="KW-0464">Manganese</keyword>
<keyword id="KW-0472">Membrane</keyword>
<keyword id="KW-0479">Metal-binding</keyword>
<keyword id="KW-0547">Nucleotide-binding</keyword>
<keyword id="KW-0597">Phosphoprotein</keyword>
<keyword id="KW-1185">Reference proteome</keyword>
<keyword id="KW-0677">Repeat</keyword>
<keyword id="KW-0812">Transmembrane</keyword>
<keyword id="KW-1133">Transmembrane helix</keyword>
<dbReference type="EC" id="4.6.1.1" evidence="8 9 10 11"/>
<dbReference type="EMBL" id="M25579">
    <property type="protein sequence ID" value="AAA79957.1"/>
    <property type="molecule type" value="mRNA"/>
</dbReference>
<dbReference type="PIR" id="A41350">
    <property type="entry name" value="A41350"/>
</dbReference>
<dbReference type="RefSeq" id="NP_776654.1">
    <property type="nucleotide sequence ID" value="NM_174229.2"/>
</dbReference>
<dbReference type="SMR" id="P19754"/>
<dbReference type="FunCoup" id="P19754">
    <property type="interactions" value="1306"/>
</dbReference>
<dbReference type="STRING" id="9913.ENSBTAP00000012528"/>
<dbReference type="BindingDB" id="P19754"/>
<dbReference type="ChEMBL" id="CHEMBL3549"/>
<dbReference type="DrugCentral" id="P19754"/>
<dbReference type="GlyCosmos" id="P19754">
    <property type="glycosylation" value="1 site, No reported glycans"/>
</dbReference>
<dbReference type="GlyGen" id="P19754">
    <property type="glycosylation" value="1 site"/>
</dbReference>
<dbReference type="iPTMnet" id="P19754"/>
<dbReference type="PaxDb" id="9913-ENSBTAP00000012528"/>
<dbReference type="Ensembl" id="ENSBTAT00000012528.6">
    <property type="protein sequence ID" value="ENSBTAP00000012528.6"/>
    <property type="gene ID" value="ENSBTAG00000009520.6"/>
</dbReference>
<dbReference type="GeneID" id="281601"/>
<dbReference type="KEGG" id="bta:281601"/>
<dbReference type="CTD" id="107"/>
<dbReference type="VEuPathDB" id="HostDB:ENSBTAG00000009520"/>
<dbReference type="VGNC" id="VGNC:25642">
    <property type="gene designation" value="ADCY1"/>
</dbReference>
<dbReference type="eggNOG" id="KOG3619">
    <property type="taxonomic scope" value="Eukaryota"/>
</dbReference>
<dbReference type="GeneTree" id="ENSGT00940000154872"/>
<dbReference type="InParanoid" id="P19754"/>
<dbReference type="OMA" id="WAWSSQS"/>
<dbReference type="OrthoDB" id="6147412at2759"/>
<dbReference type="BRENDA" id="4.6.1.1">
    <property type="organism ID" value="908"/>
</dbReference>
<dbReference type="Reactome" id="R-BTA-163615">
    <property type="pathway name" value="PKA activation"/>
</dbReference>
<dbReference type="Reactome" id="R-BTA-170660">
    <property type="pathway name" value="Adenylate cyclase activating pathway"/>
</dbReference>
<dbReference type="Reactome" id="R-BTA-170670">
    <property type="pathway name" value="Adenylate cyclase inhibitory pathway"/>
</dbReference>
<dbReference type="Reactome" id="R-BTA-418597">
    <property type="pathway name" value="G alpha (z) signalling events"/>
</dbReference>
<dbReference type="Reactome" id="R-BTA-5610787">
    <property type="pathway name" value="Hedgehog 'off' state"/>
</dbReference>
<dbReference type="PRO" id="PR:P19754"/>
<dbReference type="Proteomes" id="UP000009136">
    <property type="component" value="Chromosome 4"/>
</dbReference>
<dbReference type="Bgee" id="ENSBTAG00000009520">
    <property type="expression patterns" value="Expressed in retina and 37 other cell types or tissues"/>
</dbReference>
<dbReference type="GO" id="GO:0005737">
    <property type="term" value="C:cytoplasm"/>
    <property type="evidence" value="ECO:0000250"/>
    <property type="project" value="UniProtKB"/>
</dbReference>
<dbReference type="GO" id="GO:0098978">
    <property type="term" value="C:glutamatergic synapse"/>
    <property type="evidence" value="ECO:0007669"/>
    <property type="project" value="Ensembl"/>
</dbReference>
<dbReference type="GO" id="GO:0098686">
    <property type="term" value="C:hippocampal mossy fiber to CA3 synapse"/>
    <property type="evidence" value="ECO:0007669"/>
    <property type="project" value="Ensembl"/>
</dbReference>
<dbReference type="GO" id="GO:0045121">
    <property type="term" value="C:membrane raft"/>
    <property type="evidence" value="ECO:0007669"/>
    <property type="project" value="UniProtKB-SubCell"/>
</dbReference>
<dbReference type="GO" id="GO:0005886">
    <property type="term" value="C:plasma membrane"/>
    <property type="evidence" value="ECO:0000314"/>
    <property type="project" value="UniProtKB"/>
</dbReference>
<dbReference type="GO" id="GO:0098839">
    <property type="term" value="C:postsynaptic density membrane"/>
    <property type="evidence" value="ECO:0007669"/>
    <property type="project" value="Ensembl"/>
</dbReference>
<dbReference type="GO" id="GO:0098793">
    <property type="term" value="C:presynapse"/>
    <property type="evidence" value="ECO:0007669"/>
    <property type="project" value="GOC"/>
</dbReference>
<dbReference type="GO" id="GO:0098685">
    <property type="term" value="C:Schaffer collateral - CA1 synapse"/>
    <property type="evidence" value="ECO:0007669"/>
    <property type="project" value="Ensembl"/>
</dbReference>
<dbReference type="GO" id="GO:0004016">
    <property type="term" value="F:adenylate cyclase activity"/>
    <property type="evidence" value="ECO:0000314"/>
    <property type="project" value="UniProtKB"/>
</dbReference>
<dbReference type="GO" id="GO:0005524">
    <property type="term" value="F:ATP binding"/>
    <property type="evidence" value="ECO:0007669"/>
    <property type="project" value="UniProtKB-KW"/>
</dbReference>
<dbReference type="GO" id="GO:0008294">
    <property type="term" value="F:calcium- and calmodulin-responsive adenylate cyclase activity"/>
    <property type="evidence" value="ECO:0000314"/>
    <property type="project" value="UniProtKB"/>
</dbReference>
<dbReference type="GO" id="GO:0005516">
    <property type="term" value="F:calmodulin binding"/>
    <property type="evidence" value="ECO:0007669"/>
    <property type="project" value="UniProtKB-KW"/>
</dbReference>
<dbReference type="GO" id="GO:0046872">
    <property type="term" value="F:metal ion binding"/>
    <property type="evidence" value="ECO:0007669"/>
    <property type="project" value="UniProtKB-KW"/>
</dbReference>
<dbReference type="GO" id="GO:0007189">
    <property type="term" value="P:adenylate cyclase-activating G protein-coupled receptor signaling pathway"/>
    <property type="evidence" value="ECO:0000314"/>
    <property type="project" value="UniProtKB"/>
</dbReference>
<dbReference type="GO" id="GO:0007409">
    <property type="term" value="P:axonogenesis"/>
    <property type="evidence" value="ECO:0007669"/>
    <property type="project" value="Ensembl"/>
</dbReference>
<dbReference type="GO" id="GO:0006171">
    <property type="term" value="P:cAMP biosynthetic process"/>
    <property type="evidence" value="ECO:0000314"/>
    <property type="project" value="UniProtKB"/>
</dbReference>
<dbReference type="GO" id="GO:0071277">
    <property type="term" value="P:cellular response to calcium ion"/>
    <property type="evidence" value="ECO:0000314"/>
    <property type="project" value="UniProtKB"/>
</dbReference>
<dbReference type="GO" id="GO:1904322">
    <property type="term" value="P:cellular response to forskolin"/>
    <property type="evidence" value="ECO:0000315"/>
    <property type="project" value="UniProtKB"/>
</dbReference>
<dbReference type="GO" id="GO:0035556">
    <property type="term" value="P:intracellular signal transduction"/>
    <property type="evidence" value="ECO:0007669"/>
    <property type="project" value="InterPro"/>
</dbReference>
<dbReference type="GO" id="GO:0007616">
    <property type="term" value="P:long-term memory"/>
    <property type="evidence" value="ECO:0007669"/>
    <property type="project" value="Ensembl"/>
</dbReference>
<dbReference type="GO" id="GO:0150076">
    <property type="term" value="P:neuroinflammatory response"/>
    <property type="evidence" value="ECO:0000250"/>
    <property type="project" value="UniProtKB"/>
</dbReference>
<dbReference type="GO" id="GO:0032793">
    <property type="term" value="P:positive regulation of CREB transcription factor activity"/>
    <property type="evidence" value="ECO:0000250"/>
    <property type="project" value="UniProtKB"/>
</dbReference>
<dbReference type="GO" id="GO:1900273">
    <property type="term" value="P:positive regulation of long-term synaptic potentiation"/>
    <property type="evidence" value="ECO:0000250"/>
    <property type="project" value="UniProtKB"/>
</dbReference>
<dbReference type="GO" id="GO:0099171">
    <property type="term" value="P:presynaptic modulation of chemical synaptic transmission"/>
    <property type="evidence" value="ECO:0007669"/>
    <property type="project" value="Ensembl"/>
</dbReference>
<dbReference type="GO" id="GO:0042752">
    <property type="term" value="P:regulation of circadian rhythm"/>
    <property type="evidence" value="ECO:0000250"/>
    <property type="project" value="UniProtKB"/>
</dbReference>
<dbReference type="GO" id="GO:0048511">
    <property type="term" value="P:rhythmic process"/>
    <property type="evidence" value="ECO:0007669"/>
    <property type="project" value="UniProtKB-KW"/>
</dbReference>
<dbReference type="CDD" id="cd07302">
    <property type="entry name" value="CHD"/>
    <property type="match status" value="2"/>
</dbReference>
<dbReference type="FunFam" id="3.30.70.1230:FF:000001">
    <property type="entry name" value="Adenylate cyclase"/>
    <property type="match status" value="1"/>
</dbReference>
<dbReference type="FunFam" id="3.30.70.1230:FF:000002">
    <property type="entry name" value="Adenylate cyclase"/>
    <property type="match status" value="1"/>
</dbReference>
<dbReference type="Gene3D" id="3.30.70.1230">
    <property type="entry name" value="Nucleotide cyclase"/>
    <property type="match status" value="2"/>
</dbReference>
<dbReference type="InterPro" id="IPR001054">
    <property type="entry name" value="A/G_cyclase"/>
</dbReference>
<dbReference type="InterPro" id="IPR018297">
    <property type="entry name" value="A/G_cyclase_CS"/>
</dbReference>
<dbReference type="InterPro" id="IPR032628">
    <property type="entry name" value="AC_N"/>
</dbReference>
<dbReference type="InterPro" id="IPR030672">
    <property type="entry name" value="Adcy"/>
</dbReference>
<dbReference type="InterPro" id="IPR029787">
    <property type="entry name" value="Nucleotide_cyclase"/>
</dbReference>
<dbReference type="PANTHER" id="PTHR45627">
    <property type="entry name" value="ADENYLATE CYCLASE TYPE 1"/>
    <property type="match status" value="1"/>
</dbReference>
<dbReference type="PANTHER" id="PTHR45627:SF26">
    <property type="entry name" value="ADENYLATE CYCLASE TYPE 1"/>
    <property type="match status" value="1"/>
</dbReference>
<dbReference type="Pfam" id="PF16214">
    <property type="entry name" value="AC_N"/>
    <property type="match status" value="1"/>
</dbReference>
<dbReference type="Pfam" id="PF00211">
    <property type="entry name" value="Guanylate_cyc"/>
    <property type="match status" value="2"/>
</dbReference>
<dbReference type="PIRSF" id="PIRSF039050">
    <property type="entry name" value="Ade_cyc"/>
    <property type="match status" value="1"/>
</dbReference>
<dbReference type="SMART" id="SM00044">
    <property type="entry name" value="CYCc"/>
    <property type="match status" value="2"/>
</dbReference>
<dbReference type="SUPFAM" id="SSF55073">
    <property type="entry name" value="Nucleotide cyclase"/>
    <property type="match status" value="2"/>
</dbReference>
<dbReference type="PROSITE" id="PS00452">
    <property type="entry name" value="GUANYLATE_CYCLASE_1"/>
    <property type="match status" value="2"/>
</dbReference>
<dbReference type="PROSITE" id="PS50125">
    <property type="entry name" value="GUANYLATE_CYCLASE_2"/>
    <property type="match status" value="2"/>
</dbReference>
<feature type="chain" id="PRO_0000195681" description="Adenylate cyclase type 1">
    <location>
        <begin position="1"/>
        <end position="1134"/>
    </location>
</feature>
<feature type="topological domain" description="Cytoplasmic" evidence="5">
    <location>
        <begin position="1"/>
        <end position="65"/>
    </location>
</feature>
<feature type="transmembrane region" description="Helical" evidence="5">
    <location>
        <begin position="66"/>
        <end position="86"/>
    </location>
</feature>
<feature type="transmembrane region" description="Helical" evidence="5">
    <location>
        <begin position="90"/>
        <end position="110"/>
    </location>
</feature>
<feature type="transmembrane region" description="Helical" evidence="5">
    <location>
        <begin position="127"/>
        <end position="147"/>
    </location>
</feature>
<feature type="transmembrane region" description="Helical" evidence="5">
    <location>
        <begin position="154"/>
        <end position="174"/>
    </location>
</feature>
<feature type="transmembrane region" description="Helical" evidence="5">
    <location>
        <begin position="184"/>
        <end position="204"/>
    </location>
</feature>
<feature type="transmembrane region" description="Helical" evidence="5">
    <location>
        <begin position="216"/>
        <end position="236"/>
    </location>
</feature>
<feature type="topological domain" description="Cytoplasmic" evidence="5">
    <location>
        <begin position="237"/>
        <end position="612"/>
    </location>
</feature>
<feature type="transmembrane region" description="Helical" evidence="5">
    <location>
        <begin position="613"/>
        <end position="633"/>
    </location>
</feature>
<feature type="transmembrane region" description="Helical" evidence="5">
    <location>
        <begin position="637"/>
        <end position="657"/>
    </location>
</feature>
<feature type="transmembrane region" description="Helical" evidence="5">
    <location>
        <begin position="676"/>
        <end position="696"/>
    </location>
</feature>
<feature type="topological domain" description="Extracellular" evidence="5">
    <location>
        <begin position="697"/>
        <end position="726"/>
    </location>
</feature>
<feature type="transmembrane region" description="Helical" evidence="5">
    <location>
        <begin position="727"/>
        <end position="747"/>
    </location>
</feature>
<feature type="transmembrane region" description="Helical" evidence="5">
    <location>
        <begin position="755"/>
        <end position="775"/>
    </location>
</feature>
<feature type="transmembrane region" description="Helical" evidence="5">
    <location>
        <begin position="777"/>
        <end position="797"/>
    </location>
</feature>
<feature type="topological domain" description="Cytoplasmic" evidence="5">
    <location>
        <begin position="798"/>
        <end position="1134"/>
    </location>
</feature>
<feature type="domain" description="Guanylate cyclase 1" evidence="6">
    <location>
        <begin position="305"/>
        <end position="432"/>
    </location>
</feature>
<feature type="domain" description="Guanylate cyclase 2" evidence="6">
    <location>
        <begin position="871"/>
        <end position="1013"/>
    </location>
</feature>
<feature type="region of interest" description="Disordered" evidence="7">
    <location>
        <begin position="1"/>
        <end position="31"/>
    </location>
</feature>
<feature type="region of interest" description="Interaction with calmodulin" evidence="13">
    <location>
        <begin position="495"/>
        <end position="522"/>
    </location>
</feature>
<feature type="region of interest" description="Interaction with calmodulin" evidence="1">
    <location>
        <begin position="1027"/>
        <end position="1050"/>
    </location>
</feature>
<feature type="region of interest" description="Disordered" evidence="7">
    <location>
        <begin position="1088"/>
        <end position="1134"/>
    </location>
</feature>
<feature type="compositionally biased region" description="Gly residues" evidence="7">
    <location>
        <begin position="1"/>
        <end position="21"/>
    </location>
</feature>
<feature type="binding site" evidence="4">
    <location>
        <begin position="310"/>
        <end position="315"/>
    </location>
    <ligand>
        <name>ATP</name>
        <dbReference type="ChEBI" id="CHEBI:30616"/>
    </ligand>
</feature>
<feature type="binding site" evidence="6">
    <location>
        <position position="310"/>
    </location>
    <ligand>
        <name>Mg(2+)</name>
        <dbReference type="ChEBI" id="CHEBI:18420"/>
        <label>1</label>
        <note>catalytic</note>
    </ligand>
</feature>
<feature type="binding site" evidence="6">
    <location>
        <position position="310"/>
    </location>
    <ligand>
        <name>Mg(2+)</name>
        <dbReference type="ChEBI" id="CHEBI:18420"/>
        <label>2</label>
        <note>catalytic</note>
    </ligand>
</feature>
<feature type="binding site" evidence="6">
    <location>
        <position position="311"/>
    </location>
    <ligand>
        <name>Mg(2+)</name>
        <dbReference type="ChEBI" id="CHEBI:18420"/>
        <label>2</label>
        <note>catalytic</note>
    </ligand>
</feature>
<feature type="binding site" evidence="4">
    <location>
        <begin position="352"/>
        <end position="354"/>
    </location>
    <ligand>
        <name>ATP</name>
        <dbReference type="ChEBI" id="CHEBI:30616"/>
    </ligand>
</feature>
<feature type="binding site" evidence="6">
    <location>
        <position position="354"/>
    </location>
    <ligand>
        <name>Mg(2+)</name>
        <dbReference type="ChEBI" id="CHEBI:18420"/>
        <label>1</label>
        <note>catalytic</note>
    </ligand>
</feature>
<feature type="binding site" evidence="6">
    <location>
        <position position="354"/>
    </location>
    <ligand>
        <name>Mg(2+)</name>
        <dbReference type="ChEBI" id="CHEBI:18420"/>
        <label>2</label>
        <note>catalytic</note>
    </ligand>
</feature>
<feature type="binding site" evidence="4">
    <location>
        <position position="398"/>
    </location>
    <ligand>
        <name>ATP</name>
        <dbReference type="ChEBI" id="CHEBI:30616"/>
    </ligand>
</feature>
<feature type="binding site" evidence="3">
    <location>
        <position position="923"/>
    </location>
    <ligand>
        <name>ATP</name>
        <dbReference type="ChEBI" id="CHEBI:30616"/>
    </ligand>
</feature>
<feature type="binding site" evidence="3">
    <location>
        <begin position="1000"/>
        <end position="1002"/>
    </location>
    <ligand>
        <name>ATP</name>
        <dbReference type="ChEBI" id="CHEBI:30616"/>
    </ligand>
</feature>
<feature type="binding site" evidence="3">
    <location>
        <begin position="1007"/>
        <end position="1011"/>
    </location>
    <ligand>
        <name>ATP</name>
        <dbReference type="ChEBI" id="CHEBI:30616"/>
    </ligand>
</feature>
<feature type="binding site" evidence="3">
    <location>
        <position position="1047"/>
    </location>
    <ligand>
        <name>ATP</name>
        <dbReference type="ChEBI" id="CHEBI:30616"/>
    </ligand>
</feature>
<feature type="modified residue" description="Phosphoserine" evidence="2">
    <location>
        <position position="553"/>
    </location>
</feature>
<feature type="glycosylation site" description="N-linked (GlcNAc...) asparagine" evidence="5">
    <location>
        <position position="706"/>
    </location>
</feature>
<feature type="mutagenesis site" description="Impairs interaction with CALM and responses to Ca(2+)/calmodulin." evidence="8">
    <original>F</original>
    <variation>A</variation>
    <location>
        <position position="503"/>
    </location>
</feature>
<evidence type="ECO:0000250" key="1"/>
<evidence type="ECO:0000250" key="2">
    <source>
        <dbReference type="UniProtKB" id="O88444"/>
    </source>
</evidence>
<evidence type="ECO:0000250" key="3">
    <source>
        <dbReference type="UniProtKB" id="P26769"/>
    </source>
</evidence>
<evidence type="ECO:0000250" key="4">
    <source>
        <dbReference type="UniProtKB" id="P30803"/>
    </source>
</evidence>
<evidence type="ECO:0000255" key="5"/>
<evidence type="ECO:0000255" key="6">
    <source>
        <dbReference type="PROSITE-ProRule" id="PRU00099"/>
    </source>
</evidence>
<evidence type="ECO:0000256" key="7">
    <source>
        <dbReference type="SAM" id="MobiDB-lite"/>
    </source>
</evidence>
<evidence type="ECO:0000269" key="8">
    <source>
    </source>
</evidence>
<evidence type="ECO:0000269" key="9">
    <source>
    </source>
</evidence>
<evidence type="ECO:0000269" key="10">
    <source>
    </source>
</evidence>
<evidence type="ECO:0000269" key="11">
    <source>
    </source>
</evidence>
<evidence type="ECO:0000303" key="12">
    <source>
    </source>
</evidence>
<evidence type="ECO:0000305" key="13"/>
<evidence type="ECO:0000305" key="14">
    <source>
    </source>
</evidence>
<evidence type="ECO:0000305" key="15">
    <source>
    </source>
</evidence>
<proteinExistence type="evidence at protein level"/>